<accession>Q8A999</accession>
<feature type="chain" id="PRO_0000178432" description="Large ribosomal subunit protein bL28">
    <location>
        <begin position="1"/>
        <end position="86"/>
    </location>
</feature>
<evidence type="ECO:0000255" key="1">
    <source>
        <dbReference type="HAMAP-Rule" id="MF_00373"/>
    </source>
</evidence>
<evidence type="ECO:0000305" key="2"/>
<comment type="similarity">
    <text evidence="1">Belongs to the bacterial ribosomal protein bL28 family.</text>
</comment>
<gene>
    <name evidence="1" type="primary">rpmB</name>
    <name type="ordered locus">BT_0916</name>
</gene>
<sequence>MSKICQITGKKAMIGNNVSHSKRRTKRTFDLNLFNKKFYYVEQDCWISLSLCANGLRIINKKGLDAALNDAVAKGFCDWKSIKVIG</sequence>
<dbReference type="EMBL" id="AE015928">
    <property type="protein sequence ID" value="AAO76023.1"/>
    <property type="molecule type" value="Genomic_DNA"/>
</dbReference>
<dbReference type="RefSeq" id="NP_809829.1">
    <property type="nucleotide sequence ID" value="NC_004663.1"/>
</dbReference>
<dbReference type="RefSeq" id="WP_008765736.1">
    <property type="nucleotide sequence ID" value="NZ_UYXG01000013.1"/>
</dbReference>
<dbReference type="SMR" id="Q8A999"/>
<dbReference type="FunCoup" id="Q8A999">
    <property type="interactions" value="416"/>
</dbReference>
<dbReference type="STRING" id="226186.BT_0916"/>
<dbReference type="PaxDb" id="226186-BT_0916"/>
<dbReference type="DNASU" id="1073418"/>
<dbReference type="EnsemblBacteria" id="AAO76023">
    <property type="protein sequence ID" value="AAO76023"/>
    <property type="gene ID" value="BT_0916"/>
</dbReference>
<dbReference type="GeneID" id="69590284"/>
<dbReference type="KEGG" id="bth:BT_0916"/>
<dbReference type="PATRIC" id="fig|226186.12.peg.929"/>
<dbReference type="eggNOG" id="COG0227">
    <property type="taxonomic scope" value="Bacteria"/>
</dbReference>
<dbReference type="HOGENOM" id="CLU_064548_3_1_10"/>
<dbReference type="InParanoid" id="Q8A999"/>
<dbReference type="OrthoDB" id="9805609at2"/>
<dbReference type="Proteomes" id="UP000001414">
    <property type="component" value="Chromosome"/>
</dbReference>
<dbReference type="GO" id="GO:1990904">
    <property type="term" value="C:ribonucleoprotein complex"/>
    <property type="evidence" value="ECO:0007669"/>
    <property type="project" value="UniProtKB-KW"/>
</dbReference>
<dbReference type="GO" id="GO:0005840">
    <property type="term" value="C:ribosome"/>
    <property type="evidence" value="ECO:0007669"/>
    <property type="project" value="UniProtKB-KW"/>
</dbReference>
<dbReference type="GO" id="GO:0003735">
    <property type="term" value="F:structural constituent of ribosome"/>
    <property type="evidence" value="ECO:0000318"/>
    <property type="project" value="GO_Central"/>
</dbReference>
<dbReference type="GO" id="GO:0006412">
    <property type="term" value="P:translation"/>
    <property type="evidence" value="ECO:0007669"/>
    <property type="project" value="UniProtKB-UniRule"/>
</dbReference>
<dbReference type="FunFam" id="2.30.170.40:FF:000004">
    <property type="entry name" value="50S ribosomal protein L28"/>
    <property type="match status" value="1"/>
</dbReference>
<dbReference type="Gene3D" id="2.30.170.40">
    <property type="entry name" value="Ribosomal protein L28/L24"/>
    <property type="match status" value="1"/>
</dbReference>
<dbReference type="HAMAP" id="MF_00373">
    <property type="entry name" value="Ribosomal_bL28"/>
    <property type="match status" value="1"/>
</dbReference>
<dbReference type="InterPro" id="IPR026569">
    <property type="entry name" value="Ribosomal_bL28"/>
</dbReference>
<dbReference type="InterPro" id="IPR034704">
    <property type="entry name" value="Ribosomal_bL28/bL31-like_sf"/>
</dbReference>
<dbReference type="InterPro" id="IPR001383">
    <property type="entry name" value="Ribosomal_bL28_bact-type"/>
</dbReference>
<dbReference type="InterPro" id="IPR037147">
    <property type="entry name" value="Ribosomal_bL28_sf"/>
</dbReference>
<dbReference type="NCBIfam" id="TIGR00009">
    <property type="entry name" value="L28"/>
    <property type="match status" value="1"/>
</dbReference>
<dbReference type="PANTHER" id="PTHR13528">
    <property type="entry name" value="39S RIBOSOMAL PROTEIN L28, MITOCHONDRIAL"/>
    <property type="match status" value="1"/>
</dbReference>
<dbReference type="PANTHER" id="PTHR13528:SF2">
    <property type="entry name" value="LARGE RIBOSOMAL SUBUNIT PROTEIN BL28M"/>
    <property type="match status" value="1"/>
</dbReference>
<dbReference type="Pfam" id="PF00830">
    <property type="entry name" value="Ribosomal_L28"/>
    <property type="match status" value="1"/>
</dbReference>
<dbReference type="SUPFAM" id="SSF143800">
    <property type="entry name" value="L28p-like"/>
    <property type="match status" value="1"/>
</dbReference>
<protein>
    <recommendedName>
        <fullName evidence="1">Large ribosomal subunit protein bL28</fullName>
    </recommendedName>
    <alternativeName>
        <fullName evidence="2">50S ribosomal protein L28</fullName>
    </alternativeName>
</protein>
<reference key="1">
    <citation type="journal article" date="2003" name="Science">
        <title>A genomic view of the human-Bacteroides thetaiotaomicron symbiosis.</title>
        <authorList>
            <person name="Xu J."/>
            <person name="Bjursell M.K."/>
            <person name="Himrod J."/>
            <person name="Deng S."/>
            <person name="Carmichael L.K."/>
            <person name="Chiang H.C."/>
            <person name="Hooper L.V."/>
            <person name="Gordon J.I."/>
        </authorList>
    </citation>
    <scope>NUCLEOTIDE SEQUENCE [LARGE SCALE GENOMIC DNA]</scope>
    <source>
        <strain>ATCC 29148 / DSM 2079 / JCM 5827 / CCUG 10774 / NCTC 10582 / VPI-5482 / E50</strain>
    </source>
</reference>
<organism>
    <name type="scientific">Bacteroides thetaiotaomicron (strain ATCC 29148 / DSM 2079 / JCM 5827 / CCUG 10774 / NCTC 10582 / VPI-5482 / E50)</name>
    <dbReference type="NCBI Taxonomy" id="226186"/>
    <lineage>
        <taxon>Bacteria</taxon>
        <taxon>Pseudomonadati</taxon>
        <taxon>Bacteroidota</taxon>
        <taxon>Bacteroidia</taxon>
        <taxon>Bacteroidales</taxon>
        <taxon>Bacteroidaceae</taxon>
        <taxon>Bacteroides</taxon>
    </lineage>
</organism>
<keyword id="KW-1185">Reference proteome</keyword>
<keyword id="KW-0687">Ribonucleoprotein</keyword>
<keyword id="KW-0689">Ribosomal protein</keyword>
<name>RL28_BACTN</name>
<proteinExistence type="inferred from homology"/>